<keyword id="KW-0963">Cytoplasm</keyword>
<keyword id="KW-1015">Disulfide bond</keyword>
<keyword id="KW-0945">Host-virus interaction</keyword>
<keyword id="KW-0396">Initiation factor</keyword>
<keyword id="KW-0539">Nucleus</keyword>
<keyword id="KW-0611">Plant defense</keyword>
<keyword id="KW-0648">Protein biosynthesis</keyword>
<keyword id="KW-1185">Reference proteome</keyword>
<keyword id="KW-0694">RNA-binding</keyword>
<keyword id="KW-0810">Translation regulation</keyword>
<proteinExistence type="evidence at protein level"/>
<protein>
    <recommendedName>
        <fullName evidence="14">Eukaryotic translation initiation factor 4E-1</fullName>
        <shortName evidence="14">eIF4E-1</shortName>
    </recommendedName>
    <alternativeName>
        <fullName evidence="15">eIF-4F 25 kDa subunit</fullName>
    </alternativeName>
    <alternativeName>
        <fullName evidence="15">eIF-4F p26 subunit</fullName>
    </alternativeName>
    <alternativeName>
        <fullName evidence="15">mRNA cap-binding protein</fullName>
    </alternativeName>
</protein>
<comment type="function">
    <text evidence="5 7 8 9 10 11">Component of the protein complex eIF4F, which is involved in the recognition of the mRNA cap, ATP-dependent unwinding of 5'-terminal secondary structure and recruitment of mRNA to the ribosome (PubMed:18182024). Recognizes and binds the 7-methylguanosine-containing mRNA cap during an early step in the initiation of protein synthesis and facilitates ribosome binding by inducing the unwinding of the mRNAs secondary structures (PubMed:18182024). Key component of recessive resistance to potyviruses (PubMed:12492847, PubMed:15842624, PubMed:15971038, PubMed:16760413, PubMed:18182024, PubMed:21073716).</text>
</comment>
<comment type="function">
    <text evidence="5 7 8 9 10 11">(Microbial infection) Susceptibility host factor required for viral infection (e.g. potato virus Y (PVY) and tobacco etch virus (TEV)) by recruiting viral RNAs to the host ribosomal complex via an interaction with viral genome-linked protein (VPg).</text>
</comment>
<comment type="subunit">
    <text evidence="2">EIF4F is a multi-subunit complex, the composition of which varies with external and internal environmental conditions. It is composed of at least EIF4A, EIF4E and EIF4G. EIF4E is also known to interact with other partners. In higher plants two isoforms of EIF4F have been identified, named isoform EIF4F and isoform EIF(iso)4F. Isoform EIF4F has subunits p220 and p26, whereas isoform EIF(iso)4F has subunits p82 and p28.</text>
</comment>
<comment type="subunit">
    <text evidence="7 10">(Microbial infection) Interacts with potyvirus viral genome-linked protein (VPg); this interaction is possible in susceptible hosts but is impaired in resistant plants (PubMed:15842624, PubMed:18182024). Thus the VPg of tobacco etch virus (TEV) strain HAT interacts with susceptible alleles pvr2(+), pvr2(3) and pvr2(9) but not with the resistant allele pvr2(2), the VPg of TEV strain CAA10 interacts with susceptible alleles pvr2(+), pvr2(2), pvr2(3) and pvr2(9), the VPg of potato virus Y (PVY) strain LYE84 interacts with tomato eIF4E1 and eIF4E2 as well as with the Capsicum annuum eIF4E1 susceptible allele pvr2(+) but not with resistant alleles pvr2(1), pvr2(2), pvr2(3), pvr2(4), pvr2(5), pvr2(6), pvr2(7), pvr2(8) and pvr2(9) and the VPg of PVY strain SON41 interacts with C.annuum eIF4E1 susceptible alleles pvr2(+), pvr2(1), pvr2(2), pvr2(3) and pvr2(4) but not with resistant alleles pvr2(5), pvr2(6), pvr2(7), pvr2(8) and pvr2(9) (PubMed:18182024). In addition, the susceptible allele pvr1(+) interacts strongly with TEV strains HAT and NW VPg while resistance alleles (pvr1, pvr1(1), and pvr1(2)) fail to bind TEV VPg (PubMed:15842624).</text>
</comment>
<comment type="subcellular location">
    <subcellularLocation>
        <location evidence="1">Nucleus</location>
    </subcellularLocation>
    <subcellularLocation>
        <location evidence="1">Cytoplasm</location>
    </subcellularLocation>
</comment>
<comment type="PTM">
    <text evidence="2">According to the redox status, the Cys-126-Cys-164 disulfide bridge may have a role in regulating protein function by affecting its ability to bind capped mRNA.</text>
</comment>
<comment type="polymorphism">
    <text evidence="10">Variant present in the strains cv. Serrano Vera Cruz, allele pvr2(7), confers an increased resistance to potato virus Y (PVY) strains LYE84 and SON41 but sensitivity to tobacco etch virus (TEV) strains HAT and CAA10.</text>
</comment>
<comment type="polymorphism">
    <text evidence="10">Variant present in the strains cv. PI195301, allele pvr2(8), confers an increased resistance to potato virus Y (PVY) strains LYE84 and SON41 but sensitivity to tobacco etch virus (TEV) strains HAT and CAA10.</text>
</comment>
<comment type="polymorphism">
    <text evidence="10">Variant present in the strains cv. Chile de Arbol, allele pvr2(9), confers an increased resistance to potato virus Y (PVY) strains LYE84 and SON41 but sensitivity to tobacco etch virus (TEV) strains HAT and CAA10.</text>
</comment>
<comment type="polymorphism">
    <text evidence="12">Variant present in the strains cv. Maroc 1 and LP1, allele pvr2(6), confers an increased resistance to potato virus Y (PVY) strains LYE84 and SON41 but sensitivity to tobacco etch virus (TEV) strains HAT and CAA10.</text>
</comment>
<comment type="polymorphism">
    <text evidence="5 7 11">Variant present in the strains cv. Florida VR2, cv. Dempsey, cv. CDP06188 and cv. Chay Angolano, alleles pvr1-2 and pvr2(2), confers an increased resistance to potato virus Y (PVY) strain LYE84 and to tobacco etch virus (TEV) strains HAT and NW associated with impaired TEV VPg binding, but sensitivity to PVY strain SON41 and to TEV strains CAA10.</text>
</comment>
<comment type="polymorphism">
    <text evidence="5 6 7 10 11 12">Variant present in the strains cv. HD-C69, cv. PI201234 and cv. Perennial, allele pvr2(3), is associated with an increased resistance to potato virus Y (PVY) strain LYE84 but susceptibility to PVY strain SON41 and to tobacco etch virus (TEV) strains HAT and CAA10.</text>
</comment>
<comment type="polymorphism">
    <text evidence="5 7 11">Variant present in the strains cv. Yolo Y and cv. CDP06433, alleles pvr1-1 and pvr2(1), is associated with an increased resistance to potato virus Y (PVY) strain LYE84 but sensitivity to PVY strain SON41 and to tobacco etch virus (TEV) strains HAT and CAA10.</text>
</comment>
<comment type="polymorphism">
    <text evidence="7">Variant present in the allele pvr1, haplotype I1, confers an increased resistance to tobacco etch virus (TEV) strains HAT and NW associated with impaired TEV VPg binding and inability to bind 7-methylguanosine-containing mRNA cap.</text>
</comment>
<comment type="polymorphism">
    <text evidence="12">Variant present in the strain cv. SC81, allele pvr2(5), is associated with an increased resistance to potato virus Y (PVY) strains LYE84 and SON41 but sensitivity to tobacco etch virus (TEV) strains HAT and CAA10.</text>
</comment>
<comment type="miscellaneous">
    <text evidence="16">Displayed sequence is allele pvr2(+), haplotype B1 found in strains cv. Doux Long des Landes, cv. Yolo Wonder, cv. Flambeau, cv. PI187331, cv. Cuba 3, cv. Bousso 1, cv. Pimiento Morron, cv. H3, cv. Lamu, cv. Bastidon, cv. CDP04928 and cv. Antibois which confers sensitivity to potato virus Y (PVY) strains LYE84 and SON41 and to tobacco etch virus (TEV) strains HAT and CAA10.</text>
</comment>
<comment type="miscellaneous">
    <text evidence="9 11">The allele pvr2(2) correlates with resistance to pepper veinal mottle virus (PVMV), especially when associated with the pvr6 allele of eIF(iso)4E (PubMed:16760413). Plants harboring specific haplotypes couples for eIF4E/eIF(iso)4E are resistant or tolerant to potyvirus such as potato virus Y (PVY) (PubMed:21073716).</text>
</comment>
<comment type="similarity">
    <text evidence="15">Belongs to the eukaryotic initiation factor 4E family.</text>
</comment>
<dbReference type="EMBL" id="AY723737">
    <property type="protein sequence ID" value="AAV88614.1"/>
    <property type="molecule type" value="mRNA"/>
</dbReference>
<dbReference type="EMBL" id="AY723738">
    <property type="protein sequence ID" value="AAV88615.1"/>
    <property type="molecule type" value="mRNA"/>
</dbReference>
<dbReference type="EMBL" id="AY723739">
    <property type="protein sequence ID" value="AAV88616.1"/>
    <property type="molecule type" value="mRNA"/>
</dbReference>
<dbReference type="EMBL" id="AY723740">
    <property type="protein sequence ID" value="AAV88617.1"/>
    <property type="molecule type" value="mRNA"/>
</dbReference>
<dbReference type="EMBL" id="AY122052">
    <property type="protein sequence ID" value="AAM82190.1"/>
    <property type="molecule type" value="mRNA"/>
</dbReference>
<dbReference type="EMBL" id="AF521963">
    <property type="protein sequence ID" value="AAN74644.1"/>
    <property type="molecule type" value="mRNA"/>
</dbReference>
<dbReference type="EMBL" id="AF521964">
    <property type="protein sequence ID" value="AAN74645.1"/>
    <property type="molecule type" value="mRNA"/>
</dbReference>
<dbReference type="EMBL" id="AF521965">
    <property type="protein sequence ID" value="AAN74646.1"/>
    <property type="molecule type" value="mRNA"/>
</dbReference>
<dbReference type="EMBL" id="AH013730">
    <property type="protein sequence ID" value="AAS68034.1"/>
    <property type="molecule type" value="Genomic_DNA"/>
</dbReference>
<dbReference type="EMBL" id="AY485127">
    <property type="protein sequence ID" value="AAR23916.1"/>
    <property type="molecule type" value="mRNA"/>
</dbReference>
<dbReference type="EMBL" id="AY485129">
    <property type="protein sequence ID" value="AAR23918.1"/>
    <property type="molecule type" value="mRNA"/>
</dbReference>
<dbReference type="EMBL" id="AY485130">
    <property type="protein sequence ID" value="AAR23919.1"/>
    <property type="molecule type" value="mRNA"/>
</dbReference>
<dbReference type="EMBL" id="AY485131">
    <property type="protein sequence ID" value="AAR23920.1"/>
    <property type="molecule type" value="mRNA"/>
</dbReference>
<dbReference type="EMBL" id="EU106863">
    <property type="protein sequence ID" value="ABU97503.1"/>
    <property type="molecule type" value="mRNA"/>
</dbReference>
<dbReference type="EMBL" id="EU106864">
    <property type="protein sequence ID" value="ABU97504.1"/>
    <property type="molecule type" value="mRNA"/>
</dbReference>
<dbReference type="EMBL" id="EU106865">
    <property type="protein sequence ID" value="ABU97505.1"/>
    <property type="molecule type" value="mRNA"/>
</dbReference>
<dbReference type="EMBL" id="AYRZ02000004">
    <property type="protein sequence ID" value="PHT82687.1"/>
    <property type="molecule type" value="Genomic_DNA"/>
</dbReference>
<dbReference type="EMBL" id="FN813352">
    <property type="protein sequence ID" value="CBL81073.1"/>
    <property type="molecule type" value="mRNA"/>
</dbReference>
<dbReference type="EMBL" id="FN824321">
    <property type="protein sequence ID" value="CBL94657.1"/>
    <property type="molecule type" value="mRNA"/>
</dbReference>
<dbReference type="EMBL" id="FN824324">
    <property type="protein sequence ID" value="CBL94660.1"/>
    <property type="molecule type" value="mRNA"/>
</dbReference>
<dbReference type="EMBL" id="FN824326">
    <property type="protein sequence ID" value="CBL94662.1"/>
    <property type="molecule type" value="mRNA"/>
</dbReference>
<dbReference type="RefSeq" id="NP_001311899.1">
    <property type="nucleotide sequence ID" value="NM_001324970.1"/>
</dbReference>
<dbReference type="SMR" id="A0A1U8GR65"/>
<dbReference type="STRING" id="4072.Q2TPB3"/>
<dbReference type="GeneID" id="107868427"/>
<dbReference type="KEGG" id="cann:107868427"/>
<dbReference type="OrthoDB" id="590761at2759"/>
<dbReference type="Proteomes" id="UP000222542">
    <property type="component" value="Chromosome 4"/>
</dbReference>
<dbReference type="GO" id="GO:0005737">
    <property type="term" value="C:cytoplasm"/>
    <property type="evidence" value="ECO:0000250"/>
    <property type="project" value="UniProtKB"/>
</dbReference>
<dbReference type="GO" id="GO:0016281">
    <property type="term" value="C:eukaryotic translation initiation factor 4F complex"/>
    <property type="evidence" value="ECO:0000318"/>
    <property type="project" value="GO_Central"/>
</dbReference>
<dbReference type="GO" id="GO:0005634">
    <property type="term" value="C:nucleus"/>
    <property type="evidence" value="ECO:0000250"/>
    <property type="project" value="UniProtKB"/>
</dbReference>
<dbReference type="GO" id="GO:0000340">
    <property type="term" value="F:RNA 7-methylguanosine cap binding"/>
    <property type="evidence" value="ECO:0000318"/>
    <property type="project" value="GO_Central"/>
</dbReference>
<dbReference type="GO" id="GO:0003723">
    <property type="term" value="F:RNA binding"/>
    <property type="evidence" value="ECO:0000314"/>
    <property type="project" value="UniProtKB"/>
</dbReference>
<dbReference type="GO" id="GO:0003743">
    <property type="term" value="F:translation initiation factor activity"/>
    <property type="evidence" value="ECO:0000314"/>
    <property type="project" value="UniProtKB"/>
</dbReference>
<dbReference type="GO" id="GO:0051607">
    <property type="term" value="P:defense response to virus"/>
    <property type="evidence" value="ECO:0000315"/>
    <property type="project" value="UniProtKB"/>
</dbReference>
<dbReference type="GO" id="GO:0006417">
    <property type="term" value="P:regulation of translation"/>
    <property type="evidence" value="ECO:0007669"/>
    <property type="project" value="UniProtKB-KW"/>
</dbReference>
<dbReference type="GO" id="GO:0006413">
    <property type="term" value="P:translational initiation"/>
    <property type="evidence" value="ECO:0000314"/>
    <property type="project" value="UniProtKB"/>
</dbReference>
<dbReference type="FunFam" id="3.30.760.10:FF:000003">
    <property type="entry name" value="Eukaryotic translation initiation factor 4E"/>
    <property type="match status" value="1"/>
</dbReference>
<dbReference type="Gene3D" id="3.30.760.10">
    <property type="entry name" value="RNA Cap, Translation Initiation Factor Eif4e"/>
    <property type="match status" value="1"/>
</dbReference>
<dbReference type="InterPro" id="IPR023398">
    <property type="entry name" value="TIF_eIF4e-like"/>
</dbReference>
<dbReference type="InterPro" id="IPR001040">
    <property type="entry name" value="TIF_eIF_4E"/>
</dbReference>
<dbReference type="PANTHER" id="PTHR11960">
    <property type="entry name" value="EUKARYOTIC TRANSLATION INITIATION FACTOR 4E RELATED"/>
    <property type="match status" value="1"/>
</dbReference>
<dbReference type="PANTHER" id="PTHR11960:SF43">
    <property type="entry name" value="EUKARYOTIC TRANSLATION INITIATION FACTOR 4E-1"/>
    <property type="match status" value="1"/>
</dbReference>
<dbReference type="Pfam" id="PF01652">
    <property type="entry name" value="IF4E"/>
    <property type="match status" value="1"/>
</dbReference>
<dbReference type="SUPFAM" id="SSF55418">
    <property type="entry name" value="eIF4e-like"/>
    <property type="match status" value="1"/>
</dbReference>
<evidence type="ECO:0000250" key="1">
    <source>
        <dbReference type="UniProtKB" id="C6ZJZ3"/>
    </source>
</evidence>
<evidence type="ECO:0000250" key="2">
    <source>
        <dbReference type="UniProtKB" id="P29557"/>
    </source>
</evidence>
<evidence type="ECO:0000250" key="3">
    <source>
        <dbReference type="UniProtKB" id="Q00LS8"/>
    </source>
</evidence>
<evidence type="ECO:0000256" key="4">
    <source>
        <dbReference type="SAM" id="MobiDB-lite"/>
    </source>
</evidence>
<evidence type="ECO:0000269" key="5">
    <source>
    </source>
</evidence>
<evidence type="ECO:0000269" key="6">
    <source>
    </source>
</evidence>
<evidence type="ECO:0000269" key="7">
    <source>
    </source>
</evidence>
<evidence type="ECO:0000269" key="8">
    <source>
    </source>
</evidence>
<evidence type="ECO:0000269" key="9">
    <source>
    </source>
</evidence>
<evidence type="ECO:0000269" key="10">
    <source>
    </source>
</evidence>
<evidence type="ECO:0000269" key="11">
    <source>
    </source>
</evidence>
<evidence type="ECO:0000269" key="12">
    <source ref="1"/>
</evidence>
<evidence type="ECO:0000303" key="13">
    <source>
    </source>
</evidence>
<evidence type="ECO:0000303" key="14">
    <source>
    </source>
</evidence>
<evidence type="ECO:0000305" key="15"/>
<evidence type="ECO:0000305" key="16">
    <source ref="1"/>
</evidence>
<evidence type="ECO:0000312" key="17">
    <source>
        <dbReference type="EMBL" id="PHT82687.1"/>
    </source>
</evidence>
<reference key="1">
    <citation type="submission" date="2004-08" db="EMBL/GenBank/DDBJ databases">
        <title>Amino acid polymorphism in the eukaryotic translation initiation factor 4E determines resistance against several potyviruses in tomato and pepper.</title>
        <authorList>
            <person name="Ruffel S."/>
            <person name="Moretti A."/>
            <person name="Palloix A."/>
            <person name="Lesage M.-L."/>
            <person name="Caranta C."/>
        </authorList>
    </citation>
    <scope>NUCLEOTIDE SEQUENCE [MRNA]</scope>
    <scope>VARIANTS THR-66; 68-ALA--ALA-74 DELINS GLU-LYS-SER-LYS-GLN-ASP-ASP; ASP-73; GLY-205 AND ASN-219</scope>
    <scope>POLYMORPHISM</scope>
    <source>
        <strain>cv. Maroc1</strain>
        <strain>cv. Perennial</strain>
        <strain>cv. PI 322719</strain>
        <strain>cv. SC81</strain>
    </source>
</reference>
<reference key="2">
    <citation type="journal article" date="2002" name="Plant J.">
        <title>A natural recessive resistance gene against potato virus Y in pepper corresponds to the eukaryotic initiation factor 4E (eIF4E).</title>
        <authorList>
            <person name="Ruffel S."/>
            <person name="Dussault M.-H."/>
            <person name="Palloix A."/>
            <person name="Moury B."/>
            <person name="Bendahmane A."/>
            <person name="Robaglia C."/>
            <person name="Caranta C."/>
        </authorList>
    </citation>
    <scope>NUCLEOTIDE SEQUENCE [MRNA]</scope>
    <scope>FUNCTION</scope>
    <scope>FUNCTION (MICROBIAL INFECTION)</scope>
    <scope>VARIANTS GLU-67; ARG-79; ASN-109 AND GLY-205</scope>
    <scope>POLYMORPHISM</scope>
    <source>
        <strain>cv. Doux Long des Landes</strain>
        <strain>cv. Florida VR2</strain>
        <strain>cv. Yolo Wonder</strain>
        <strain>cv. Yolo Y</strain>
    </source>
</reference>
<reference key="3">
    <citation type="journal article" date="2004" name="Gene">
        <title>Structural analysis of the eukaryotic initiation factor 4E gene controlling potyvirus resistance in pepper: exploitation of a BAC library.</title>
        <authorList>
            <person name="Ruffel S."/>
            <person name="Caranta C."/>
            <person name="Palloix A."/>
            <person name="Lefebvre V."/>
            <person name="Caboche M."/>
            <person name="Bendahmane A."/>
        </authorList>
    </citation>
    <scope>NUCLEOTIDE SEQUENCE [GENOMIC DNA]</scope>
    <scope>VARIANTS GLU-67 AND GLY-205</scope>
    <scope>POLYMORPHISM</scope>
    <source>
        <strain>cv. Yolo Wonder/HD208</strain>
    </source>
</reference>
<reference key="4">
    <citation type="journal article" date="2005" name="Plant J.">
        <title>The pvr1 locus in Capsicum encodes a translation initiation factor eIF4E that interacts with Tobacco etch virus VPg.</title>
        <authorList>
            <person name="Kang B.-C."/>
            <person name="Yeam I."/>
            <person name="Frantz J.D."/>
            <person name="Murphy J.F."/>
            <person name="Jahn M.M."/>
        </authorList>
    </citation>
    <scope>NUCLEOTIDE SEQUENCE [MRNA]</scope>
    <scope>FUNCTION</scope>
    <scope>FUNCTION (MICROBIAL INFECTION)</scope>
    <scope>VARIANTS ALA-51; THR-66; GLU-67; ARG-71; ARG-79; ARG-107; ASN-109 AND GLY-205</scope>
    <scope>INTERACTION WITH VIRAL VPG (MICROBIAL INFECTION)</scope>
    <scope>POLYMORPHISM</scope>
    <source>
        <strain>cv. Dempsey</strain>
        <strain>cv. ECW</strain>
        <strain>cv. PI159234</strain>
        <strain>cv. Yolo Y</strain>
    </source>
</reference>
<reference key="5">
    <citation type="journal article" date="2008" name="Plant J.">
        <title>Natural variation and functional analyses provide evidence for co-evolution between plant eIF4E and potyviral VPg.</title>
        <authorList>
            <person name="Charron C."/>
            <person name="Nicolai M."/>
            <person name="Gallois J.-L."/>
            <person name="Robaglia C."/>
            <person name="Moury B."/>
            <person name="Palloix A."/>
            <person name="Caranta C."/>
        </authorList>
    </citation>
    <scope>NUCLEOTIDE SEQUENCE [MRNA]</scope>
    <scope>VARIANTS GLU-68; 68-ALA--ALA-73 DELINS GLU-LYS-SER-LYS-GLN-ASP; ARG-79; ARG-107 AND GLY-205</scope>
    <scope>FUNCTION</scope>
    <scope>FUNCTION (MICROBIAL INFECTION)</scope>
    <scope>INTERACTION WITH VIRAL VPG (MICROBIAL INFECTION)</scope>
    <scope>POLYMORPHISM</scope>
    <source>
        <strain>cv. Antibois</strain>
        <strain>cv. Bastidon</strain>
        <strain>cv. Bousso 1</strain>
        <strain>cv. Chay Angolano</strain>
        <strain>cv. Chile de Arbol</strain>
        <strain>cv. Cuba 3</strain>
        <strain>cv. Flambeau</strain>
        <strain>cv. Florida VR2</strain>
        <strain>cv. H3</strain>
        <strain>cv. HD-C69</strain>
        <strain>cv. Lamu</strain>
        <strain>cv. LP1</strain>
        <strain>cv. Maroc 1</strain>
        <strain>cv. Perennial</strain>
        <strain>cv. PI187331</strain>
        <strain>cv. PI195301</strain>
        <strain>cv. PI201234</strain>
        <strain>cv. PI322719</strain>
        <strain>cv. Pimiento Morron</strain>
        <strain>cv. SC81</strain>
        <strain>cv. Serrano Vera Cruz</strain>
        <strain>cv. Yolo Y</strain>
    </source>
</reference>
<reference key="6">
    <citation type="journal article" date="2014" name="Nat. Genet.">
        <title>Genome sequence of the hot pepper provides insights into the evolution of pungency in Capsicum species.</title>
        <authorList>
            <person name="Kim S."/>
            <person name="Park M."/>
            <person name="Yeom S.I."/>
            <person name="Kim Y.M."/>
            <person name="Lee J.M."/>
            <person name="Lee H.A."/>
            <person name="Seo E."/>
            <person name="Choi J."/>
            <person name="Cheong K."/>
            <person name="Kim K.T."/>
            <person name="Jung K."/>
            <person name="Lee G.W."/>
            <person name="Oh S.K."/>
            <person name="Bae C."/>
            <person name="Kim S.B."/>
            <person name="Lee H.Y."/>
            <person name="Kim S.Y."/>
            <person name="Kim M.S."/>
            <person name="Kang B.C."/>
            <person name="Jo Y.D."/>
            <person name="Yang H.B."/>
            <person name="Jeong H.J."/>
            <person name="Kang W.H."/>
            <person name="Kwon J.K."/>
            <person name="Shin C."/>
            <person name="Lim J.Y."/>
            <person name="Park J.H."/>
            <person name="Huh J.H."/>
            <person name="Kim J.S."/>
            <person name="Kim B.D."/>
            <person name="Cohen O."/>
            <person name="Paran I."/>
            <person name="Suh M.C."/>
            <person name="Lee S.B."/>
            <person name="Kim Y.K."/>
            <person name="Shin Y."/>
            <person name="Noh S.J."/>
            <person name="Park J."/>
            <person name="Seo Y.S."/>
            <person name="Kwon S.Y."/>
            <person name="Kim H.A."/>
            <person name="Park J.M."/>
            <person name="Kim H.J."/>
            <person name="Choi S.B."/>
            <person name="Bosland P.W."/>
            <person name="Reeves G."/>
            <person name="Jo S.H."/>
            <person name="Lee B.W."/>
            <person name="Cho H.T."/>
            <person name="Choi H.S."/>
            <person name="Lee M.S."/>
            <person name="Yu Y."/>
            <person name="Do Choi Y."/>
            <person name="Park B.S."/>
            <person name="van Deynze A."/>
            <person name="Ashrafi H."/>
            <person name="Hill T."/>
            <person name="Kim W.T."/>
            <person name="Pai H.S."/>
            <person name="Ahn H.K."/>
            <person name="Yeam I."/>
            <person name="Giovannoni J.J."/>
            <person name="Rose J.K."/>
            <person name="Soerensen I."/>
            <person name="Lee S.J."/>
            <person name="Kim R.W."/>
            <person name="Choi I.Y."/>
            <person name="Choi B.S."/>
            <person name="Lim J.S."/>
            <person name="Lee Y.H."/>
            <person name="Choi D."/>
        </authorList>
    </citation>
    <scope>NUCLEOTIDE SEQUENCE [LARGE SCALE GENOMIC DNA]</scope>
    <source>
        <strain>cv. CM334</strain>
    </source>
</reference>
<reference key="7">
    <citation type="journal article" date="2014" name="Proc. Natl. Acad. Sci. U.S.A.">
        <title>Whole-genome sequencing of cultivated and wild peppers provides insights into Capsicum domestication and specialization.</title>
        <authorList>
            <person name="Qin C."/>
            <person name="Yu C."/>
            <person name="Shen Y."/>
            <person name="Fang X."/>
            <person name="Chen L."/>
            <person name="Min J."/>
            <person name="Cheng J."/>
            <person name="Zhao S."/>
            <person name="Xu M."/>
            <person name="Luo Y."/>
            <person name="Yang Y."/>
            <person name="Wu Z."/>
            <person name="Mao L."/>
            <person name="Wu H."/>
            <person name="Ling-Hu C."/>
            <person name="Zhou H."/>
            <person name="Lin H."/>
            <person name="Gonzalez-Morales S."/>
            <person name="Trejo-Saavedra D.L."/>
            <person name="Tian H."/>
            <person name="Tang X."/>
            <person name="Zhao M."/>
            <person name="Huang Z."/>
            <person name="Zhou A."/>
            <person name="Yao X."/>
            <person name="Cui J."/>
            <person name="Li W."/>
            <person name="Chen Z."/>
            <person name="Feng Y."/>
            <person name="Niu Y."/>
            <person name="Bi S."/>
            <person name="Yang X."/>
            <person name="Li W."/>
            <person name="Cai H."/>
            <person name="Luo X."/>
            <person name="Montes-Hernandez S."/>
            <person name="Leyva-Gonzalez M.A."/>
            <person name="Xiong Z."/>
            <person name="He X."/>
            <person name="Bai L."/>
            <person name="Tan S."/>
            <person name="Tang X."/>
            <person name="Liu D."/>
            <person name="Liu J."/>
            <person name="Zhang S."/>
            <person name="Chen M."/>
            <person name="Zhang L."/>
            <person name="Zhang L."/>
            <person name="Zhang Y."/>
            <person name="Liao W."/>
            <person name="Zhang Y."/>
            <person name="Wang M."/>
            <person name="Lv X."/>
            <person name="Wen B."/>
            <person name="Liu H."/>
            <person name="Luan H."/>
            <person name="Zhang Y."/>
            <person name="Yang S."/>
            <person name="Wang X."/>
            <person name="Xu J."/>
            <person name="Li X."/>
            <person name="Li S."/>
            <person name="Wang J."/>
            <person name="Palloix A."/>
            <person name="Bosland P.W."/>
            <person name="Li Y."/>
            <person name="Krogh A."/>
            <person name="Rivera-Bustamante R.F."/>
            <person name="Herrera-Estrella L."/>
            <person name="Yin Y."/>
            <person name="Yu J."/>
            <person name="Hu K."/>
            <person name="Zhang Z."/>
        </authorList>
    </citation>
    <scope>NUCLEOTIDE SEQUENCE [LARGE SCALE GENOMIC DNA]</scope>
    <source>
        <strain>cv. Zunla-1</strain>
    </source>
</reference>
<reference key="8">
    <citation type="journal article" date="2017" name="Genome Biol.">
        <title>New reference genome sequences of hot pepper reveal the massive evolution of plant disease-resistance genes by retroduplication.</title>
        <authorList>
            <person name="Kim S."/>
            <person name="Park J."/>
            <person name="Yeom S.I."/>
            <person name="Kim Y.M."/>
            <person name="Seo E."/>
            <person name="Kim K.T."/>
            <person name="Kim M.S."/>
            <person name="Lee J.M."/>
            <person name="Cheong K."/>
            <person name="Shin H.S."/>
            <person name="Kim S.B."/>
            <person name="Han K."/>
            <person name="Lee J."/>
            <person name="Park M."/>
            <person name="Lee H.A."/>
            <person name="Lee H.Y."/>
            <person name="Lee Y."/>
            <person name="Oh S."/>
            <person name="Lee J.H."/>
            <person name="Choi E."/>
            <person name="Choi E."/>
            <person name="Lee S.E."/>
            <person name="Jeon J."/>
            <person name="Kim H."/>
            <person name="Choi G."/>
            <person name="Song H."/>
            <person name="Lee J."/>
            <person name="Lee S.C."/>
            <person name="Kwon J.K."/>
            <person name="Lee H.Y."/>
            <person name="Koo N."/>
            <person name="Hong Y."/>
            <person name="Kim R.W."/>
            <person name="Kang W.H."/>
            <person name="Huh J.H."/>
            <person name="Kang B.C."/>
            <person name="Yang T.J."/>
            <person name="Lee Y.H."/>
            <person name="Bennetzen J.L."/>
            <person name="Choi D."/>
        </authorList>
    </citation>
    <scope>NUCLEOTIDE SEQUENCE [LARGE SCALE GENOMIC DNA]</scope>
    <source>
        <strain>cv. CM334</strain>
    </source>
</reference>
<reference key="9">
    <citation type="journal article" date="2010" name="BMC Genomics">
        <title>EcoTILLING in Capsicum species: searching for new virus resistances.</title>
        <authorList>
            <person name="Ibiza V.P."/>
            <person name="Canizares J."/>
            <person name="Nuez F."/>
        </authorList>
    </citation>
    <scope>NUCLEOTIDE SEQUENCE [MRNA] OF 7-228</scope>
    <scope>FUNCTION</scope>
    <scope>FUNCTION (MICROBIAL INFECTION)</scope>
    <scope>VARIANTS THR-15; VAL-15; ASP-65; THR-66; GLU-67; ARG-71; ASP-73; THR-73; ASP-74; ILE-77; ARG-79; ARG-107; ASN-109; ILE-131; GLY-160; GLY-205; HIS-213; GLU-214; ALA-216; ARG-218; PHE-218; ASN-219 AND SER-221</scope>
    <scope>POLYMORPHISM</scope>
    <source>
        <strain>cv. CDP00620</strain>
        <strain>cv. CDP04928</strain>
        <strain>cv. CDP06188</strain>
        <strain>cv. CDP06433</strain>
        <tissue>Leaf</tissue>
    </source>
</reference>
<reference key="10">
    <citation type="journal article" date="2005" name="Mol. Genet. Genomics">
        <title>The recessive potyvirus resistance gene pot-1 is the tomato orthologue of the pepper pvr2-eIF4E gene.</title>
        <authorList>
            <person name="Ruffel S."/>
            <person name="Gallois J.L."/>
            <person name="Lesage M.L."/>
            <person name="Caranta C."/>
        </authorList>
    </citation>
    <scope>FUNCTION</scope>
    <scope>FUNCTION (MICROBIAL INFECTION)</scope>
</reference>
<reference key="11">
    <citation type="journal article" date="2006" name="J. Gen. Virol.">
        <title>Simultaneous mutations in translation initiation factors eIF4E and eIF(iso)4E are required to prevent pepper veinal mottle virus infection of pepper.</title>
        <authorList>
            <person name="Ruffel S."/>
            <person name="Gallois J.-L."/>
            <person name="Moury B."/>
            <person name="Robaglia C."/>
            <person name="Palloix A."/>
            <person name="Caranta C."/>
        </authorList>
    </citation>
    <scope>FUNCTION</scope>
    <scope>FUNCTION (MICROBIAL INFECTION)</scope>
    <source>
        <strain>cv. Florida VR2</strain>
        <strain>cv. Yolo Wonder</strain>
        <strain>cv. Yolo Y</strain>
    </source>
</reference>
<reference key="12">
    <citation type="journal article" date="2014" name="Infect. Genet. Evol.">
        <title>Evolution of plant eukaryotic initiation factor 4E (eIF4E) and potyvirus genome-linked protein (VPg): a game of mirrors impacting resistance spectrum and durability.</title>
        <authorList>
            <person name="Moury B."/>
            <person name="Charron C."/>
            <person name="Janzac B."/>
            <person name="Simon V."/>
            <person name="Gallois J.L."/>
            <person name="Palloix A."/>
            <person name="Caranta C."/>
        </authorList>
    </citation>
    <scope>GENE FAMILY</scope>
    <scope>REVIEW</scope>
</reference>
<gene>
    <name evidence="14" type="primary">eIF4E</name>
    <name evidence="13" type="synonym">PVR1</name>
    <name evidence="14" type="synonym">PVR2</name>
    <name type="ORF">LOC107868427</name>
    <name evidence="17" type="ORF">T459_11130</name>
</gene>
<accession>A0A1U8GR65</accession>
<accession>A7XZS4</accession>
<accession>A7XZS6</accession>
<accession>A7XZS7</accession>
<accession>I0J1J4</accession>
<accession>I2FKR0</accession>
<accession>I2FKR3</accession>
<accession>I2FKR5</accession>
<accession>Q2TPB0</accession>
<accession>Q2TPB1</accession>
<accession>Q2TPB2</accession>
<accession>Q2TPB3</accession>
<accession>Q6RZ28</accession>
<accession>Q6RZ30</accession>
<accession>Q8GSF9</accession>
<accession>Q8H6L5</accession>
<accession>Q8H6L6</accession>
<name>IF4E1_CAPAN</name>
<feature type="chain" id="PRO_0000454063" description="Eukaryotic translation initiation factor 4E-1">
    <location>
        <begin position="1"/>
        <end position="228"/>
    </location>
</feature>
<feature type="region of interest" description="Disordered" evidence="4">
    <location>
        <begin position="1"/>
        <end position="33"/>
    </location>
</feature>
<feature type="region of interest" description="EIF4G-binding" evidence="3">
    <location>
        <begin position="53"/>
        <end position="56"/>
    </location>
</feature>
<feature type="region of interest" description="EIF4G-binding" evidence="3">
    <location>
        <begin position="63"/>
        <end position="99"/>
    </location>
</feature>
<feature type="region of interest" description="EIF4G-binding" evidence="3">
    <location>
        <begin position="147"/>
        <end position="156"/>
    </location>
</feature>
<feature type="compositionally biased region" description="Basic and acidic residues" evidence="4">
    <location>
        <begin position="1"/>
        <end position="19"/>
    </location>
</feature>
<feature type="compositionally biased region" description="Acidic residues" evidence="4">
    <location>
        <begin position="24"/>
        <end position="33"/>
    </location>
</feature>
<feature type="binding site" evidence="2">
    <location>
        <begin position="71"/>
        <end position="76"/>
    </location>
    <ligand>
        <name>mRNA</name>
        <dbReference type="ChEBI" id="CHEBI:33699"/>
    </ligand>
    <ligandPart>
        <name>N(7)-methylguanosine 5'-triphosphate group</name>
        <dbReference type="ChEBI" id="CHEBI:74429"/>
        <note>m7GTP residue in mRNA cap</note>
    </ligandPart>
</feature>
<feature type="binding site" evidence="2">
    <location>
        <position position="103"/>
    </location>
    <ligand>
        <name>mRNA</name>
        <dbReference type="ChEBI" id="CHEBI:33699"/>
    </ligand>
    <ligandPart>
        <name>N(7)-methylguanosine 5'-triphosphate group</name>
        <dbReference type="ChEBI" id="CHEBI:74429"/>
        <note>m7GTP residue in mRNA cap</note>
    </ligandPart>
</feature>
<feature type="binding site" evidence="2">
    <location>
        <begin position="121"/>
        <end position="122"/>
    </location>
    <ligand>
        <name>mRNA</name>
        <dbReference type="ChEBI" id="CHEBI:33699"/>
    </ligand>
    <ligandPart>
        <name>N(7)-methylguanosine 5'-triphosphate group</name>
        <dbReference type="ChEBI" id="CHEBI:74429"/>
        <note>m7GTP residue in mRNA cap</note>
    </ligandPart>
</feature>
<feature type="binding site" evidence="2">
    <location>
        <begin position="171"/>
        <end position="176"/>
    </location>
    <ligand>
        <name>mRNA</name>
        <dbReference type="ChEBI" id="CHEBI:33699"/>
    </ligand>
    <ligandPart>
        <name>N(7)-methylguanosine 5'-triphosphate group</name>
        <dbReference type="ChEBI" id="CHEBI:74429"/>
        <note>m7GTP residue in mRNA cap</note>
    </ligandPart>
</feature>
<feature type="binding site" evidence="3">
    <location>
        <begin position="216"/>
        <end position="220"/>
    </location>
    <ligand>
        <name>mRNA</name>
        <dbReference type="ChEBI" id="CHEBI:33699"/>
    </ligand>
    <ligandPart>
        <name>N(7)-methylguanosine 5'-triphosphate group</name>
        <dbReference type="ChEBI" id="CHEBI:74429"/>
        <note>m7GTP residue in mRNA cap</note>
    </ligandPart>
</feature>
<feature type="disulfide bond" evidence="2">
    <location>
        <begin position="126"/>
        <end position="164"/>
    </location>
</feature>
<feature type="sequence variant" description="In allele pvr2(15), haplotype C1." evidence="11">
    <original>A</original>
    <variation>T</variation>
    <location>
        <position position="15"/>
    </location>
</feature>
<feature type="sequence variant" description="In allele pvr2(17), haplotype R1." evidence="11">
    <original>A</original>
    <variation>V</variation>
    <location>
        <position position="15"/>
    </location>
</feature>
<feature type="sequence variant" description="In allele pvr1, haplotype I1. In allele pvr2(21), haplotype P1." evidence="7 11">
    <original>T</original>
    <variation>A</variation>
    <location>
        <position position="51"/>
    </location>
</feature>
<feature type="sequence variant" description="In allele pvr2(13), haplotype N1. In allele pvr2(14), haplotype O1. In allele pvr2(11), haplotype H1. In allele pvr2(12), haplotype K1. In haplotype Sh." evidence="11">
    <original>N</original>
    <variation>D</variation>
    <location>
        <position position="65"/>
    </location>
</feature>
<feature type="sequence variant" description="In strain: SC81, allele pvr2(5). In allele pvr1, haplotype I1. In allele pvr2(10), haplotype D1." evidence="7 11 12">
    <original>P</original>
    <variation>T</variation>
    <location>
        <position position="66"/>
    </location>
</feature>
<feature type="sequence variant" description="In strain: Yolo Y and CDP06433; alleles pvr1-1 and pvr2(1). In strain: HD-C69; PI201234 and Perennial; allele pvr2(3). In strain: Florida VR2; Dempsey; CDP06188 and Chay Angolano; alleles pvr1-2 and pvr2(2)." evidence="5 6 7 11">
    <original>V</original>
    <variation>E</variation>
    <location>
        <position position="67"/>
    </location>
</feature>
<feature type="sequence variant" description="In strain: Maroc 1 and LP1, allele pvr2(6)." evidence="12">
    <original>AKSKQAA</original>
    <variation>VEKSKQDD</variation>
    <location>
        <begin position="68"/>
        <end position="74"/>
    </location>
</feature>
<feature type="sequence variant" description="In strain: Chile de Arbol, allele pvr2(9)." evidence="10">
    <original>AKSKQA</original>
    <variation>EKSKQD</variation>
    <location>
        <begin position="68"/>
        <end position="73"/>
    </location>
</feature>
<feature type="sequence variant" description="In strain: PI195301, allele pvr2(8)." evidence="10">
    <original>A</original>
    <variation>E</variation>
    <location>
        <position position="68"/>
    </location>
</feature>
<feature type="sequence variant" description="In strain: CDP00620, allele pvr1(+), haplotypes F1 and F2. In allele pvr2(17), haplotype R1. In allele pvr2(15), haplotype C1. In allele pvr2(22), haplotype Q1. In allele pvr2(16), haplotype G1. In allele pvr2(19), haplotype L1. In allele pvr2(18), haplotype J1. In allele pvr2(13), haplotype N1. In allele pvr2(14), haplotype O1. In allele pvr2(11), haplotype H1. In allele pvr2(12), haplotype K1. In haplotype Sh. In allele pvr2(20), haplotype M1. In allele pvr1, haplotype I1. In allele pvr2(10), haplotype D1. In allele pvr2(21), haplotype P1." evidence="7 11">
    <original>K</original>
    <variation>R</variation>
    <location>
        <position position="71"/>
    </location>
</feature>
<feature type="sequence variant" description="In strain: SC81, allele pvr2(5). In allele pvr2(12), haplotype K1. In allele pvr2(10), haplotype D1." evidence="11 12">
    <original>A</original>
    <variation>D</variation>
    <location>
        <position position="73"/>
    </location>
</feature>
<feature type="sequence variant" description="In allele pvr2(20)." evidence="11">
    <original>A</original>
    <variation>T</variation>
    <location>
        <position position="73"/>
    </location>
</feature>
<feature type="sequence variant" description="In allele pvr2(13), haplotype N1. In haplotype Sh." evidence="11">
    <original>A</original>
    <variation>D</variation>
    <location>
        <position position="74"/>
    </location>
</feature>
<feature type="sequence variant" description="In allele pvr2(22), haplotype Q1." evidence="11">
    <original>S</original>
    <variation>I</variation>
    <location>
        <position position="77"/>
    </location>
</feature>
<feature type="sequence variant" description="In strain: Yolo Y and CDP06433; alleles pvr1-1 and pvr2(1). In strain: Florida VR2; Dempsey; CDP06188 and Chay Angolano; alleles pvr1-2 and pvr2(2). In strain: Serrano Vera Cruz; allele pvr2(7). In allele pvr2(19)." evidence="5 7 10 11">
    <original>L</original>
    <variation>R</variation>
    <location>
        <position position="79"/>
    </location>
</feature>
<feature type="sequence variant" description="In allele pvr1, haplotype I1. In allele pvr2(8). In allele pvr2(10), haplotype D1." evidence="7 10 11">
    <original>G</original>
    <variation>R</variation>
    <location>
        <position position="107"/>
    </location>
</feature>
<feature type="sequence variant" description="In strain: Florida VR2; CDP06188; Dempsey and Chay Angolano; alleles pvr1-2 and pvr2(2)." evidence="5 7 11">
    <original>D</original>
    <variation>N</variation>
    <location>
        <position position="109"/>
    </location>
</feature>
<feature type="sequence variant" description="In allele pvr2(16), haplotype G1. In haplotype Sh." evidence="11">
    <original>T</original>
    <variation>I</variation>
    <location>
        <position position="131"/>
    </location>
</feature>
<feature type="sequence variant" description="In allele pvr2(18), haplotype J1." evidence="11">
    <original>E</original>
    <variation>G</variation>
    <location>
        <position position="160"/>
    </location>
</feature>
<feature type="sequence variant" description="In strain: HD-C69, PI201234 and Perennial, allele pvr2(3)." evidence="5 6 7 10 11 12">
    <original>D</original>
    <variation>G</variation>
    <location>
        <position position="205"/>
    </location>
</feature>
<feature type="sequence variant" description="In allele pvr2(11), haplotype H1." evidence="11">
    <original>D</original>
    <variation>H</variation>
    <location>
        <position position="213"/>
    </location>
</feature>
<feature type="sequence variant" description="In allele pvr2(18), haplotype J1." evidence="11">
    <original>D</original>
    <variation>E</variation>
    <location>
        <position position="214"/>
    </location>
</feature>
<feature type="sequence variant" description="In allele pvr2(18), haplotype J1." evidence="11">
    <original>K</original>
    <variation>A</variation>
    <location>
        <position position="216"/>
    </location>
</feature>
<feature type="sequence variant" description="In allele pvr2(10), haplotype D1." evidence="11">
    <original>L</original>
    <variation>F</variation>
    <location>
        <position position="218"/>
    </location>
</feature>
<feature type="sequence variant" description="In allele pvr2(11), haplotype H1." evidence="11">
    <original>L</original>
    <variation>R</variation>
    <location>
        <position position="218"/>
    </location>
</feature>
<feature type="sequence variant" description="In strain: SC81, allele pvr2(5). In allele pvr2(18), haplotype J1." evidence="11 12">
    <original>D</original>
    <variation>N</variation>
    <location>
        <position position="219"/>
    </location>
</feature>
<feature type="sequence variant" description="In haplotype Sh." evidence="11">
    <original>N</original>
    <variation>S</variation>
    <location>
        <position position="221"/>
    </location>
</feature>
<organism>
    <name type="scientific">Capsicum annuum</name>
    <name type="common">Capsicum pepper</name>
    <dbReference type="NCBI Taxonomy" id="4072"/>
    <lineage>
        <taxon>Eukaryota</taxon>
        <taxon>Viridiplantae</taxon>
        <taxon>Streptophyta</taxon>
        <taxon>Embryophyta</taxon>
        <taxon>Tracheophyta</taxon>
        <taxon>Spermatophyta</taxon>
        <taxon>Magnoliopsida</taxon>
        <taxon>eudicotyledons</taxon>
        <taxon>Gunneridae</taxon>
        <taxon>Pentapetalae</taxon>
        <taxon>asterids</taxon>
        <taxon>lamiids</taxon>
        <taxon>Solanales</taxon>
        <taxon>Solanaceae</taxon>
        <taxon>Solanoideae</taxon>
        <taxon>Capsiceae</taxon>
        <taxon>Capsicum</taxon>
    </lineage>
</organism>
<sequence length="228" mass="25908">MATAEMEKTTTFDEAEKVKLNANEADDEVEEGEIVEETDDTTSYLSKEIATKHPLEHSWTFWFDNPVAKSKQAAWGSSLRNVYTFSTVEDFWGAYNNIHHPSKLVVGADLHCFKHKIEPKWEDPVCANGGTWKMSFSKGKSDTSWLYTLLAMIGHQFDHEDEICGAVVSVRGKGEKISLWTKNAANETAQVSIGKQWKQFLDYSDSVGFIFHDDAKRLDRNAKNRYTV</sequence>